<name>UNG_SALNS</name>
<dbReference type="EC" id="3.2.2.27" evidence="1"/>
<dbReference type="EMBL" id="CP001113">
    <property type="protein sequence ID" value="ACF61571.1"/>
    <property type="molecule type" value="Genomic_DNA"/>
</dbReference>
<dbReference type="RefSeq" id="WP_000179978.1">
    <property type="nucleotide sequence ID" value="NZ_CCMR01000001.1"/>
</dbReference>
<dbReference type="SMR" id="B4T290"/>
<dbReference type="KEGG" id="see:SNSL254_A2859"/>
<dbReference type="HOGENOM" id="CLU_032162_3_0_6"/>
<dbReference type="Proteomes" id="UP000008824">
    <property type="component" value="Chromosome"/>
</dbReference>
<dbReference type="GO" id="GO:0005737">
    <property type="term" value="C:cytoplasm"/>
    <property type="evidence" value="ECO:0007669"/>
    <property type="project" value="UniProtKB-SubCell"/>
</dbReference>
<dbReference type="GO" id="GO:0004844">
    <property type="term" value="F:uracil DNA N-glycosylase activity"/>
    <property type="evidence" value="ECO:0007669"/>
    <property type="project" value="UniProtKB-UniRule"/>
</dbReference>
<dbReference type="GO" id="GO:0097510">
    <property type="term" value="P:base-excision repair, AP site formation via deaminated base removal"/>
    <property type="evidence" value="ECO:0007669"/>
    <property type="project" value="TreeGrafter"/>
</dbReference>
<dbReference type="CDD" id="cd10027">
    <property type="entry name" value="UDG-F1-like"/>
    <property type="match status" value="1"/>
</dbReference>
<dbReference type="FunFam" id="3.40.470.10:FF:000001">
    <property type="entry name" value="Uracil-DNA glycosylase"/>
    <property type="match status" value="1"/>
</dbReference>
<dbReference type="Gene3D" id="3.40.470.10">
    <property type="entry name" value="Uracil-DNA glycosylase-like domain"/>
    <property type="match status" value="1"/>
</dbReference>
<dbReference type="HAMAP" id="MF_00148">
    <property type="entry name" value="UDG"/>
    <property type="match status" value="1"/>
</dbReference>
<dbReference type="InterPro" id="IPR002043">
    <property type="entry name" value="UDG_fam1"/>
</dbReference>
<dbReference type="InterPro" id="IPR018085">
    <property type="entry name" value="Ura-DNA_Glyclase_AS"/>
</dbReference>
<dbReference type="InterPro" id="IPR005122">
    <property type="entry name" value="Uracil-DNA_glycosylase-like"/>
</dbReference>
<dbReference type="InterPro" id="IPR036895">
    <property type="entry name" value="Uracil-DNA_glycosylase-like_sf"/>
</dbReference>
<dbReference type="NCBIfam" id="NF003588">
    <property type="entry name" value="PRK05254.1-1"/>
    <property type="match status" value="1"/>
</dbReference>
<dbReference type="NCBIfam" id="NF003589">
    <property type="entry name" value="PRK05254.1-2"/>
    <property type="match status" value="1"/>
</dbReference>
<dbReference type="NCBIfam" id="NF003591">
    <property type="entry name" value="PRK05254.1-4"/>
    <property type="match status" value="1"/>
</dbReference>
<dbReference type="NCBIfam" id="NF003592">
    <property type="entry name" value="PRK05254.1-5"/>
    <property type="match status" value="1"/>
</dbReference>
<dbReference type="NCBIfam" id="TIGR00628">
    <property type="entry name" value="ung"/>
    <property type="match status" value="1"/>
</dbReference>
<dbReference type="PANTHER" id="PTHR11264">
    <property type="entry name" value="URACIL-DNA GLYCOSYLASE"/>
    <property type="match status" value="1"/>
</dbReference>
<dbReference type="PANTHER" id="PTHR11264:SF0">
    <property type="entry name" value="URACIL-DNA GLYCOSYLASE"/>
    <property type="match status" value="1"/>
</dbReference>
<dbReference type="Pfam" id="PF03167">
    <property type="entry name" value="UDG"/>
    <property type="match status" value="1"/>
</dbReference>
<dbReference type="SMART" id="SM00986">
    <property type="entry name" value="UDG"/>
    <property type="match status" value="1"/>
</dbReference>
<dbReference type="SMART" id="SM00987">
    <property type="entry name" value="UreE_C"/>
    <property type="match status" value="1"/>
</dbReference>
<dbReference type="SUPFAM" id="SSF52141">
    <property type="entry name" value="Uracil-DNA glycosylase-like"/>
    <property type="match status" value="1"/>
</dbReference>
<dbReference type="PROSITE" id="PS00130">
    <property type="entry name" value="U_DNA_GLYCOSYLASE"/>
    <property type="match status" value="1"/>
</dbReference>
<reference key="1">
    <citation type="journal article" date="2011" name="J. Bacteriol.">
        <title>Comparative genomics of 28 Salmonella enterica isolates: evidence for CRISPR-mediated adaptive sublineage evolution.</title>
        <authorList>
            <person name="Fricke W.F."/>
            <person name="Mammel M.K."/>
            <person name="McDermott P.F."/>
            <person name="Tartera C."/>
            <person name="White D.G."/>
            <person name="Leclerc J.E."/>
            <person name="Ravel J."/>
            <person name="Cebula T.A."/>
        </authorList>
    </citation>
    <scope>NUCLEOTIDE SEQUENCE [LARGE SCALE GENOMIC DNA]</scope>
    <source>
        <strain>SL254</strain>
    </source>
</reference>
<protein>
    <recommendedName>
        <fullName evidence="1">Uracil-DNA glycosylase</fullName>
        <shortName evidence="1">UDG</shortName>
        <ecNumber evidence="1">3.2.2.27</ecNumber>
    </recommendedName>
</protein>
<proteinExistence type="inferred from homology"/>
<accession>B4T290</accession>
<keyword id="KW-0963">Cytoplasm</keyword>
<keyword id="KW-0227">DNA damage</keyword>
<keyword id="KW-0234">DNA repair</keyword>
<keyword id="KW-0378">Hydrolase</keyword>
<comment type="function">
    <text evidence="1">Excises uracil residues from the DNA which can arise as a result of misincorporation of dUMP residues by DNA polymerase or due to deamination of cytosine.</text>
</comment>
<comment type="catalytic activity">
    <reaction evidence="1">
        <text>Hydrolyzes single-stranded DNA or mismatched double-stranded DNA and polynucleotides, releasing free uracil.</text>
        <dbReference type="EC" id="3.2.2.27"/>
    </reaction>
</comment>
<comment type="subcellular location">
    <subcellularLocation>
        <location evidence="1">Cytoplasm</location>
    </subcellularLocation>
</comment>
<comment type="similarity">
    <text evidence="1">Belongs to the uracil-DNA glycosylase (UDG) superfamily. UNG family.</text>
</comment>
<gene>
    <name evidence="1" type="primary">ung</name>
    <name type="ordered locus">SNSL254_A2859</name>
</gene>
<evidence type="ECO:0000255" key="1">
    <source>
        <dbReference type="HAMAP-Rule" id="MF_00148"/>
    </source>
</evidence>
<organism>
    <name type="scientific">Salmonella newport (strain SL254)</name>
    <dbReference type="NCBI Taxonomy" id="423368"/>
    <lineage>
        <taxon>Bacteria</taxon>
        <taxon>Pseudomonadati</taxon>
        <taxon>Pseudomonadota</taxon>
        <taxon>Gammaproteobacteria</taxon>
        <taxon>Enterobacterales</taxon>
        <taxon>Enterobacteriaceae</taxon>
        <taxon>Salmonella</taxon>
    </lineage>
</organism>
<feature type="chain" id="PRO_1000096606" description="Uracil-DNA glycosylase">
    <location>
        <begin position="1"/>
        <end position="229"/>
    </location>
</feature>
<feature type="active site" description="Proton acceptor" evidence="1">
    <location>
        <position position="64"/>
    </location>
</feature>
<sequence length="229" mass="25480">MATELTWHDVLADEKQQPYFINTLHTVAGERQSGITVYPPQKDVFNAFRFTELGDVKVVILGQDPYHGPGQAHGLAFSVRPGIAPPPSLVNMYKELEASIPGFVRPAHGYLESWARQGVLLLNTVLTVRAGQAHSHASLGWETFTDKVISLINQHREGVVFLLWGSHAQKKGAIIDPQRHHILKAPHPSPLSAHRGFFGCNHFALTNQWLEQHGEKTIDWTPVLPAESE</sequence>